<sequence length="103" mass="11592">MADQKIQIRLKAFDCRLIDRSAGEIVETAKRTGAHVRGPIPLPTKIERCTILVSPHADKDARDQYETCTYKRVLYIVDPNDKTVDALMRLELAAGVDVQIKLT</sequence>
<feature type="chain" id="PRO_1000127208" description="Small ribosomal subunit protein uS10">
    <location>
        <begin position="1"/>
        <end position="103"/>
    </location>
</feature>
<proteinExistence type="inferred from homology"/>
<comment type="function">
    <text evidence="1">Involved in the binding of tRNA to the ribosomes.</text>
</comment>
<comment type="subunit">
    <text evidence="1">Part of the 30S ribosomal subunit.</text>
</comment>
<comment type="similarity">
    <text evidence="1">Belongs to the universal ribosomal protein uS10 family.</text>
</comment>
<name>RS10_XYLFM</name>
<reference key="1">
    <citation type="journal article" date="2010" name="J. Bacteriol.">
        <title>Whole genome sequences of two Xylella fastidiosa strains (M12 and M23) causing almond leaf scorch disease in California.</title>
        <authorList>
            <person name="Chen J."/>
            <person name="Xie G."/>
            <person name="Han S."/>
            <person name="Chertkov O."/>
            <person name="Sims D."/>
            <person name="Civerolo E.L."/>
        </authorList>
    </citation>
    <scope>NUCLEOTIDE SEQUENCE [LARGE SCALE GENOMIC DNA]</scope>
    <source>
        <strain>M12</strain>
    </source>
</reference>
<protein>
    <recommendedName>
        <fullName evidence="1">Small ribosomal subunit protein uS10</fullName>
    </recommendedName>
    <alternativeName>
        <fullName evidence="2">30S ribosomal protein S10</fullName>
    </alternativeName>
</protein>
<accession>B0U5A6</accession>
<keyword id="KW-0687">Ribonucleoprotein</keyword>
<keyword id="KW-0689">Ribosomal protein</keyword>
<evidence type="ECO:0000255" key="1">
    <source>
        <dbReference type="HAMAP-Rule" id="MF_00508"/>
    </source>
</evidence>
<evidence type="ECO:0000305" key="2"/>
<organism>
    <name type="scientific">Xylella fastidiosa (strain M12)</name>
    <dbReference type="NCBI Taxonomy" id="405440"/>
    <lineage>
        <taxon>Bacteria</taxon>
        <taxon>Pseudomonadati</taxon>
        <taxon>Pseudomonadota</taxon>
        <taxon>Gammaproteobacteria</taxon>
        <taxon>Lysobacterales</taxon>
        <taxon>Lysobacteraceae</taxon>
        <taxon>Xylella</taxon>
    </lineage>
</organism>
<gene>
    <name evidence="1" type="primary">rpsJ</name>
    <name type="ordered locus">Xfasm12_0493</name>
</gene>
<dbReference type="EMBL" id="CP000941">
    <property type="protein sequence ID" value="ACA11502.1"/>
    <property type="molecule type" value="Genomic_DNA"/>
</dbReference>
<dbReference type="RefSeq" id="WP_012337683.1">
    <property type="nucleotide sequence ID" value="NC_010513.1"/>
</dbReference>
<dbReference type="SMR" id="B0U5A6"/>
<dbReference type="GeneID" id="93904138"/>
<dbReference type="KEGG" id="xfm:Xfasm12_0493"/>
<dbReference type="HOGENOM" id="CLU_122625_1_3_6"/>
<dbReference type="GO" id="GO:1990904">
    <property type="term" value="C:ribonucleoprotein complex"/>
    <property type="evidence" value="ECO:0007669"/>
    <property type="project" value="UniProtKB-KW"/>
</dbReference>
<dbReference type="GO" id="GO:0005840">
    <property type="term" value="C:ribosome"/>
    <property type="evidence" value="ECO:0007669"/>
    <property type="project" value="UniProtKB-KW"/>
</dbReference>
<dbReference type="GO" id="GO:0003735">
    <property type="term" value="F:structural constituent of ribosome"/>
    <property type="evidence" value="ECO:0007669"/>
    <property type="project" value="InterPro"/>
</dbReference>
<dbReference type="GO" id="GO:0000049">
    <property type="term" value="F:tRNA binding"/>
    <property type="evidence" value="ECO:0007669"/>
    <property type="project" value="UniProtKB-UniRule"/>
</dbReference>
<dbReference type="GO" id="GO:0006412">
    <property type="term" value="P:translation"/>
    <property type="evidence" value="ECO:0007669"/>
    <property type="project" value="UniProtKB-UniRule"/>
</dbReference>
<dbReference type="FunFam" id="3.30.70.600:FF:000003">
    <property type="entry name" value="30S ribosomal protein S10"/>
    <property type="match status" value="1"/>
</dbReference>
<dbReference type="Gene3D" id="3.30.70.600">
    <property type="entry name" value="Ribosomal protein S10 domain"/>
    <property type="match status" value="1"/>
</dbReference>
<dbReference type="HAMAP" id="MF_00508">
    <property type="entry name" value="Ribosomal_uS10"/>
    <property type="match status" value="1"/>
</dbReference>
<dbReference type="InterPro" id="IPR001848">
    <property type="entry name" value="Ribosomal_uS10"/>
</dbReference>
<dbReference type="InterPro" id="IPR018268">
    <property type="entry name" value="Ribosomal_uS10_CS"/>
</dbReference>
<dbReference type="InterPro" id="IPR027486">
    <property type="entry name" value="Ribosomal_uS10_dom"/>
</dbReference>
<dbReference type="InterPro" id="IPR036838">
    <property type="entry name" value="Ribosomal_uS10_dom_sf"/>
</dbReference>
<dbReference type="NCBIfam" id="NF001861">
    <property type="entry name" value="PRK00596.1"/>
    <property type="match status" value="1"/>
</dbReference>
<dbReference type="NCBIfam" id="TIGR01049">
    <property type="entry name" value="rpsJ_bact"/>
    <property type="match status" value="1"/>
</dbReference>
<dbReference type="PANTHER" id="PTHR11700">
    <property type="entry name" value="30S RIBOSOMAL PROTEIN S10 FAMILY MEMBER"/>
    <property type="match status" value="1"/>
</dbReference>
<dbReference type="Pfam" id="PF00338">
    <property type="entry name" value="Ribosomal_S10"/>
    <property type="match status" value="1"/>
</dbReference>
<dbReference type="PRINTS" id="PR00971">
    <property type="entry name" value="RIBOSOMALS10"/>
</dbReference>
<dbReference type="SMART" id="SM01403">
    <property type="entry name" value="Ribosomal_S10"/>
    <property type="match status" value="1"/>
</dbReference>
<dbReference type="SUPFAM" id="SSF54999">
    <property type="entry name" value="Ribosomal protein S10"/>
    <property type="match status" value="1"/>
</dbReference>
<dbReference type="PROSITE" id="PS00361">
    <property type="entry name" value="RIBOSOMAL_S10"/>
    <property type="match status" value="1"/>
</dbReference>